<evidence type="ECO:0000255" key="1">
    <source>
        <dbReference type="HAMAP-Rule" id="MF_01690"/>
    </source>
</evidence>
<accession>A1S647</accession>
<reference key="1">
    <citation type="submission" date="2006-12" db="EMBL/GenBank/DDBJ databases">
        <title>Complete sequence of Shewanella amazonensis SB2B.</title>
        <authorList>
            <consortium name="US DOE Joint Genome Institute"/>
            <person name="Copeland A."/>
            <person name="Lucas S."/>
            <person name="Lapidus A."/>
            <person name="Barry K."/>
            <person name="Detter J.C."/>
            <person name="Glavina del Rio T."/>
            <person name="Hammon N."/>
            <person name="Israni S."/>
            <person name="Dalin E."/>
            <person name="Tice H."/>
            <person name="Pitluck S."/>
            <person name="Munk A.C."/>
            <person name="Brettin T."/>
            <person name="Bruce D."/>
            <person name="Han C."/>
            <person name="Tapia R."/>
            <person name="Gilna P."/>
            <person name="Schmutz J."/>
            <person name="Larimer F."/>
            <person name="Land M."/>
            <person name="Hauser L."/>
            <person name="Kyrpides N."/>
            <person name="Mikhailova N."/>
            <person name="Fredrickson J."/>
            <person name="Richardson P."/>
        </authorList>
    </citation>
    <scope>NUCLEOTIDE SEQUENCE [LARGE SCALE GENOMIC DNA]</scope>
    <source>
        <strain>ATCC BAA-1098 / SB2B</strain>
    </source>
</reference>
<dbReference type="EC" id="3.5.1.18" evidence="1"/>
<dbReference type="EMBL" id="CP000507">
    <property type="protein sequence ID" value="ABL99853.1"/>
    <property type="molecule type" value="Genomic_DNA"/>
</dbReference>
<dbReference type="RefSeq" id="WP_011759761.1">
    <property type="nucleotide sequence ID" value="NC_008700.1"/>
</dbReference>
<dbReference type="SMR" id="A1S647"/>
<dbReference type="STRING" id="326297.Sama_1647"/>
<dbReference type="KEGG" id="saz:Sama_1647"/>
<dbReference type="eggNOG" id="COG0624">
    <property type="taxonomic scope" value="Bacteria"/>
</dbReference>
<dbReference type="HOGENOM" id="CLU_021802_4_0_6"/>
<dbReference type="OrthoDB" id="9809784at2"/>
<dbReference type="UniPathway" id="UPA00034">
    <property type="reaction ID" value="UER00021"/>
</dbReference>
<dbReference type="Proteomes" id="UP000009175">
    <property type="component" value="Chromosome"/>
</dbReference>
<dbReference type="GO" id="GO:0008777">
    <property type="term" value="F:acetylornithine deacetylase activity"/>
    <property type="evidence" value="ECO:0007669"/>
    <property type="project" value="TreeGrafter"/>
</dbReference>
<dbReference type="GO" id="GO:0050897">
    <property type="term" value="F:cobalt ion binding"/>
    <property type="evidence" value="ECO:0007669"/>
    <property type="project" value="UniProtKB-UniRule"/>
</dbReference>
<dbReference type="GO" id="GO:0009014">
    <property type="term" value="F:succinyl-diaminopimelate desuccinylase activity"/>
    <property type="evidence" value="ECO:0007669"/>
    <property type="project" value="UniProtKB-UniRule"/>
</dbReference>
<dbReference type="GO" id="GO:0008270">
    <property type="term" value="F:zinc ion binding"/>
    <property type="evidence" value="ECO:0007669"/>
    <property type="project" value="UniProtKB-UniRule"/>
</dbReference>
<dbReference type="GO" id="GO:0019877">
    <property type="term" value="P:diaminopimelate biosynthetic process"/>
    <property type="evidence" value="ECO:0007669"/>
    <property type="project" value="UniProtKB-UniRule"/>
</dbReference>
<dbReference type="GO" id="GO:0006526">
    <property type="term" value="P:L-arginine biosynthetic process"/>
    <property type="evidence" value="ECO:0007669"/>
    <property type="project" value="TreeGrafter"/>
</dbReference>
<dbReference type="GO" id="GO:0009089">
    <property type="term" value="P:lysine biosynthetic process via diaminopimelate"/>
    <property type="evidence" value="ECO:0007669"/>
    <property type="project" value="UniProtKB-UniRule"/>
</dbReference>
<dbReference type="CDD" id="cd03891">
    <property type="entry name" value="M20_DapE_proteobac"/>
    <property type="match status" value="1"/>
</dbReference>
<dbReference type="FunFam" id="3.30.70.360:FF:000011">
    <property type="entry name" value="Succinyl-diaminopimelate desuccinylase"/>
    <property type="match status" value="1"/>
</dbReference>
<dbReference type="FunFam" id="3.40.630.10:FF:000005">
    <property type="entry name" value="Succinyl-diaminopimelate desuccinylase"/>
    <property type="match status" value="1"/>
</dbReference>
<dbReference type="Gene3D" id="3.40.630.10">
    <property type="entry name" value="Zn peptidases"/>
    <property type="match status" value="2"/>
</dbReference>
<dbReference type="HAMAP" id="MF_01690">
    <property type="entry name" value="DapE"/>
    <property type="match status" value="1"/>
</dbReference>
<dbReference type="InterPro" id="IPR001261">
    <property type="entry name" value="ArgE/DapE_CS"/>
</dbReference>
<dbReference type="InterPro" id="IPR036264">
    <property type="entry name" value="Bact_exopeptidase_dim_dom"/>
</dbReference>
<dbReference type="InterPro" id="IPR005941">
    <property type="entry name" value="DapE_proteobac"/>
</dbReference>
<dbReference type="InterPro" id="IPR002933">
    <property type="entry name" value="Peptidase_M20"/>
</dbReference>
<dbReference type="InterPro" id="IPR011650">
    <property type="entry name" value="Peptidase_M20_dimer"/>
</dbReference>
<dbReference type="InterPro" id="IPR050072">
    <property type="entry name" value="Peptidase_M20A"/>
</dbReference>
<dbReference type="NCBIfam" id="TIGR01246">
    <property type="entry name" value="dapE_proteo"/>
    <property type="match status" value="1"/>
</dbReference>
<dbReference type="NCBIfam" id="NF009557">
    <property type="entry name" value="PRK13009.1"/>
    <property type="match status" value="1"/>
</dbReference>
<dbReference type="PANTHER" id="PTHR43808">
    <property type="entry name" value="ACETYLORNITHINE DEACETYLASE"/>
    <property type="match status" value="1"/>
</dbReference>
<dbReference type="PANTHER" id="PTHR43808:SF31">
    <property type="entry name" value="N-ACETYL-L-CITRULLINE DEACETYLASE"/>
    <property type="match status" value="1"/>
</dbReference>
<dbReference type="Pfam" id="PF07687">
    <property type="entry name" value="M20_dimer"/>
    <property type="match status" value="1"/>
</dbReference>
<dbReference type="Pfam" id="PF01546">
    <property type="entry name" value="Peptidase_M20"/>
    <property type="match status" value="1"/>
</dbReference>
<dbReference type="SUPFAM" id="SSF55031">
    <property type="entry name" value="Bacterial exopeptidase dimerisation domain"/>
    <property type="match status" value="1"/>
</dbReference>
<dbReference type="SUPFAM" id="SSF53187">
    <property type="entry name" value="Zn-dependent exopeptidases"/>
    <property type="match status" value="1"/>
</dbReference>
<dbReference type="PROSITE" id="PS00759">
    <property type="entry name" value="ARGE_DAPE_CPG2_2"/>
    <property type="match status" value="1"/>
</dbReference>
<organism>
    <name type="scientific">Shewanella amazonensis (strain ATCC BAA-1098 / SB2B)</name>
    <dbReference type="NCBI Taxonomy" id="326297"/>
    <lineage>
        <taxon>Bacteria</taxon>
        <taxon>Pseudomonadati</taxon>
        <taxon>Pseudomonadota</taxon>
        <taxon>Gammaproteobacteria</taxon>
        <taxon>Alteromonadales</taxon>
        <taxon>Shewanellaceae</taxon>
        <taxon>Shewanella</taxon>
    </lineage>
</organism>
<sequence>MSSPETHSDVIELTRELISRPSVTPLDEGCQDLMAKRLAAIGFTIEPMVFEDTTNLWARRGTEGPVFCFAGHTDVVPVGDLNRWHTPPFDPVVIDGYIHGRGAADMKGSLAAMVVAAERFVAEHPDHQGSIAFLITSDEEGPFINGTVRVVETLEARHEKITWALVGEPSSTHLLGDVVKNGRRGSLTGNLTVKGIQGHVAYPHLADNPIHRAAPALAELSRIEWDKGNEFFPPTSFQIANINGGTGASNVIPGELKVMFNFRYSTEVTAETLIARVLGILDAHGLDYDIDWVFNGLPFLTGEGPLLDATREAIFEVTGTHTDPQTTGGTSDGRFIAPTGAQVIELGPVNATIHKVNECVKASDLELLTGCYQRILEKLLCN</sequence>
<keyword id="KW-0028">Amino-acid biosynthesis</keyword>
<keyword id="KW-0170">Cobalt</keyword>
<keyword id="KW-0220">Diaminopimelate biosynthesis</keyword>
<keyword id="KW-0378">Hydrolase</keyword>
<keyword id="KW-0457">Lysine biosynthesis</keyword>
<keyword id="KW-0479">Metal-binding</keyword>
<keyword id="KW-1185">Reference proteome</keyword>
<keyword id="KW-0862">Zinc</keyword>
<protein>
    <recommendedName>
        <fullName evidence="1">Succinyl-diaminopimelate desuccinylase</fullName>
        <shortName evidence="1">SDAP desuccinylase</shortName>
        <ecNumber evidence="1">3.5.1.18</ecNumber>
    </recommendedName>
    <alternativeName>
        <fullName evidence="1">N-succinyl-LL-2,6-diaminoheptanedioate amidohydrolase</fullName>
    </alternativeName>
</protein>
<name>DAPE_SHEAM</name>
<gene>
    <name evidence="1" type="primary">dapE</name>
    <name type="ordered locus">Sama_1647</name>
</gene>
<comment type="function">
    <text evidence="1">Catalyzes the hydrolysis of N-succinyl-L,L-diaminopimelic acid (SDAP), forming succinate and LL-2,6-diaminopimelate (DAP), an intermediate involved in the bacterial biosynthesis of lysine and meso-diaminopimelic acid, an essential component of bacterial cell walls.</text>
</comment>
<comment type="catalytic activity">
    <reaction evidence="1">
        <text>N-succinyl-(2S,6S)-2,6-diaminopimelate + H2O = (2S,6S)-2,6-diaminopimelate + succinate</text>
        <dbReference type="Rhea" id="RHEA:22608"/>
        <dbReference type="ChEBI" id="CHEBI:15377"/>
        <dbReference type="ChEBI" id="CHEBI:30031"/>
        <dbReference type="ChEBI" id="CHEBI:57609"/>
        <dbReference type="ChEBI" id="CHEBI:58087"/>
        <dbReference type="EC" id="3.5.1.18"/>
    </reaction>
</comment>
<comment type="cofactor">
    <cofactor evidence="1">
        <name>Zn(2+)</name>
        <dbReference type="ChEBI" id="CHEBI:29105"/>
    </cofactor>
    <cofactor evidence="1">
        <name>Co(2+)</name>
        <dbReference type="ChEBI" id="CHEBI:48828"/>
    </cofactor>
    <text evidence="1">Binds 2 Zn(2+) or Co(2+) ions per subunit.</text>
</comment>
<comment type="pathway">
    <text evidence="1">Amino-acid biosynthesis; L-lysine biosynthesis via DAP pathway; LL-2,6-diaminopimelate from (S)-tetrahydrodipicolinate (succinylase route): step 3/3.</text>
</comment>
<comment type="subunit">
    <text evidence="1">Homodimer.</text>
</comment>
<comment type="similarity">
    <text evidence="1">Belongs to the peptidase M20A family. DapE subfamily.</text>
</comment>
<proteinExistence type="inferred from homology"/>
<feature type="chain" id="PRO_0000375725" description="Succinyl-diaminopimelate desuccinylase">
    <location>
        <begin position="1"/>
        <end position="382"/>
    </location>
</feature>
<feature type="active site" evidence="1">
    <location>
        <position position="74"/>
    </location>
</feature>
<feature type="active site" description="Proton acceptor" evidence="1">
    <location>
        <position position="139"/>
    </location>
</feature>
<feature type="binding site" evidence="1">
    <location>
        <position position="72"/>
    </location>
    <ligand>
        <name>Zn(2+)</name>
        <dbReference type="ChEBI" id="CHEBI:29105"/>
        <label>1</label>
    </ligand>
</feature>
<feature type="binding site" evidence="1">
    <location>
        <position position="105"/>
    </location>
    <ligand>
        <name>Zn(2+)</name>
        <dbReference type="ChEBI" id="CHEBI:29105"/>
        <label>1</label>
    </ligand>
</feature>
<feature type="binding site" evidence="1">
    <location>
        <position position="105"/>
    </location>
    <ligand>
        <name>Zn(2+)</name>
        <dbReference type="ChEBI" id="CHEBI:29105"/>
        <label>2</label>
    </ligand>
</feature>
<feature type="binding site" evidence="1">
    <location>
        <position position="140"/>
    </location>
    <ligand>
        <name>Zn(2+)</name>
        <dbReference type="ChEBI" id="CHEBI:29105"/>
        <label>2</label>
    </ligand>
</feature>
<feature type="binding site" evidence="1">
    <location>
        <position position="168"/>
    </location>
    <ligand>
        <name>Zn(2+)</name>
        <dbReference type="ChEBI" id="CHEBI:29105"/>
        <label>1</label>
    </ligand>
</feature>
<feature type="binding site" evidence="1">
    <location>
        <position position="354"/>
    </location>
    <ligand>
        <name>Zn(2+)</name>
        <dbReference type="ChEBI" id="CHEBI:29105"/>
        <label>2</label>
    </ligand>
</feature>